<proteinExistence type="inferred from homology"/>
<accession>A4QJA2</accession>
<comment type="function">
    <text evidence="1">F(1)F(0) ATP synthase produces ATP from ADP in the presence of a proton or sodium gradient. F-type ATPases consist of two structural domains, F(1) containing the extramembraneous catalytic core and F(0) containing the membrane proton channel, linked together by a central stalk and a peripheral stalk. During catalysis, ATP synthesis in the catalytic domain of F(1) is coupled via a rotary mechanism of the central stalk subunits to proton translocation.</text>
</comment>
<comment type="function">
    <text evidence="1">Key component of the F(0) channel; it plays a direct role in translocation across the membrane. A homomeric c-ring of between 10-14 subunits forms the central stalk rotor element with the F(1) delta and epsilon subunits.</text>
</comment>
<comment type="subunit">
    <text evidence="1">F-type ATPases have 2 components, F(1) - the catalytic core - and F(0) - the membrane proton channel. F(1) has five subunits: alpha(3), beta(3), gamma(1), delta(1), epsilon(1). F(0) has four main subunits: a(1), b(1), b'(1) and c(10-14). The alpha and beta chains form an alternating ring which encloses part of the gamma chain. F(1) is attached to F(0) by a central stalk formed by the gamma and epsilon chains, while a peripheral stalk is formed by the delta, b and b' chains.</text>
</comment>
<comment type="subcellular location">
    <subcellularLocation>
        <location evidence="1">Plastid</location>
        <location evidence="1">Chloroplast thylakoid membrane</location>
        <topology evidence="1">Multi-pass membrane protein</topology>
    </subcellularLocation>
</comment>
<comment type="miscellaneous">
    <text>In plastids the F-type ATPase is also known as CF(1)CF(0).</text>
</comment>
<comment type="similarity">
    <text evidence="1">Belongs to the ATPase C chain family.</text>
</comment>
<evidence type="ECO:0000255" key="1">
    <source>
        <dbReference type="HAMAP-Rule" id="MF_01396"/>
    </source>
</evidence>
<name>ATPH_AETCO</name>
<geneLocation type="chloroplast"/>
<dbReference type="EMBL" id="AP009366">
    <property type="protein sequence ID" value="BAF49757.1"/>
    <property type="molecule type" value="Genomic_DNA"/>
</dbReference>
<dbReference type="RefSeq" id="YP_001122933.1">
    <property type="nucleotide sequence ID" value="NC_009265.1"/>
</dbReference>
<dbReference type="SMR" id="A4QJA2"/>
<dbReference type="GeneID" id="4968561"/>
<dbReference type="GO" id="GO:0009535">
    <property type="term" value="C:chloroplast thylakoid membrane"/>
    <property type="evidence" value="ECO:0007669"/>
    <property type="project" value="UniProtKB-SubCell"/>
</dbReference>
<dbReference type="GO" id="GO:0045259">
    <property type="term" value="C:proton-transporting ATP synthase complex"/>
    <property type="evidence" value="ECO:0007669"/>
    <property type="project" value="UniProtKB-KW"/>
</dbReference>
<dbReference type="GO" id="GO:0033177">
    <property type="term" value="C:proton-transporting two-sector ATPase complex, proton-transporting domain"/>
    <property type="evidence" value="ECO:0007669"/>
    <property type="project" value="InterPro"/>
</dbReference>
<dbReference type="GO" id="GO:0008289">
    <property type="term" value="F:lipid binding"/>
    <property type="evidence" value="ECO:0007669"/>
    <property type="project" value="UniProtKB-KW"/>
</dbReference>
<dbReference type="GO" id="GO:0046933">
    <property type="term" value="F:proton-transporting ATP synthase activity, rotational mechanism"/>
    <property type="evidence" value="ECO:0007669"/>
    <property type="project" value="UniProtKB-UniRule"/>
</dbReference>
<dbReference type="CDD" id="cd18183">
    <property type="entry name" value="ATP-synt_Fo_c_ATPH"/>
    <property type="match status" value="1"/>
</dbReference>
<dbReference type="FunFam" id="1.20.20.10:FF:000001">
    <property type="entry name" value="ATP synthase subunit c, chloroplastic"/>
    <property type="match status" value="1"/>
</dbReference>
<dbReference type="Gene3D" id="1.20.20.10">
    <property type="entry name" value="F1F0 ATP synthase subunit C"/>
    <property type="match status" value="1"/>
</dbReference>
<dbReference type="HAMAP" id="MF_01396">
    <property type="entry name" value="ATP_synth_c_bact"/>
    <property type="match status" value="1"/>
</dbReference>
<dbReference type="InterPro" id="IPR005953">
    <property type="entry name" value="ATP_synth_csu_bac/chlpt"/>
</dbReference>
<dbReference type="InterPro" id="IPR000454">
    <property type="entry name" value="ATP_synth_F0_csu"/>
</dbReference>
<dbReference type="InterPro" id="IPR020537">
    <property type="entry name" value="ATP_synth_F0_csu_DDCD_BS"/>
</dbReference>
<dbReference type="InterPro" id="IPR038662">
    <property type="entry name" value="ATP_synth_F0_csu_sf"/>
</dbReference>
<dbReference type="InterPro" id="IPR002379">
    <property type="entry name" value="ATPase_proteolipid_c-like_dom"/>
</dbReference>
<dbReference type="InterPro" id="IPR035921">
    <property type="entry name" value="F/V-ATP_Csub_sf"/>
</dbReference>
<dbReference type="NCBIfam" id="TIGR01260">
    <property type="entry name" value="ATP_synt_c"/>
    <property type="match status" value="1"/>
</dbReference>
<dbReference type="NCBIfam" id="NF005608">
    <property type="entry name" value="PRK07354.1"/>
    <property type="match status" value="1"/>
</dbReference>
<dbReference type="PANTHER" id="PTHR10031">
    <property type="entry name" value="ATP SYNTHASE LIPID-BINDING PROTEIN, MITOCHONDRIAL"/>
    <property type="match status" value="1"/>
</dbReference>
<dbReference type="PANTHER" id="PTHR10031:SF0">
    <property type="entry name" value="ATPASE PROTEIN 9"/>
    <property type="match status" value="1"/>
</dbReference>
<dbReference type="Pfam" id="PF00137">
    <property type="entry name" value="ATP-synt_C"/>
    <property type="match status" value="1"/>
</dbReference>
<dbReference type="PRINTS" id="PR00124">
    <property type="entry name" value="ATPASEC"/>
</dbReference>
<dbReference type="SUPFAM" id="SSF81333">
    <property type="entry name" value="F1F0 ATP synthase subunit C"/>
    <property type="match status" value="1"/>
</dbReference>
<dbReference type="PROSITE" id="PS00605">
    <property type="entry name" value="ATPASE_C"/>
    <property type="match status" value="1"/>
</dbReference>
<protein>
    <recommendedName>
        <fullName evidence="1">ATP synthase subunit c, chloroplastic</fullName>
    </recommendedName>
    <alternativeName>
        <fullName evidence="1">ATP synthase F(0) sector subunit c</fullName>
    </alternativeName>
    <alternativeName>
        <fullName evidence="1">ATPase subunit III</fullName>
    </alternativeName>
    <alternativeName>
        <fullName evidence="1">F-type ATPase subunit c</fullName>
        <shortName evidence="1">F-ATPase subunit c</shortName>
    </alternativeName>
    <alternativeName>
        <fullName evidence="1">Lipid-binding protein</fullName>
    </alternativeName>
</protein>
<organism>
    <name type="scientific">Aethionema cordifolium</name>
    <name type="common">Lebanon stonecress</name>
    <dbReference type="NCBI Taxonomy" id="434059"/>
    <lineage>
        <taxon>Eukaryota</taxon>
        <taxon>Viridiplantae</taxon>
        <taxon>Streptophyta</taxon>
        <taxon>Embryophyta</taxon>
        <taxon>Tracheophyta</taxon>
        <taxon>Spermatophyta</taxon>
        <taxon>Magnoliopsida</taxon>
        <taxon>eudicotyledons</taxon>
        <taxon>Gunneridae</taxon>
        <taxon>Pentapetalae</taxon>
        <taxon>rosids</taxon>
        <taxon>malvids</taxon>
        <taxon>Brassicales</taxon>
        <taxon>Brassicaceae</taxon>
        <taxon>Aethionemeae</taxon>
        <taxon>Aethionema</taxon>
    </lineage>
</organism>
<gene>
    <name evidence="1" type="primary">atpH</name>
</gene>
<feature type="chain" id="PRO_0000362881" description="ATP synthase subunit c, chloroplastic">
    <location>
        <begin position="1"/>
        <end position="81"/>
    </location>
</feature>
<feature type="transmembrane region" description="Helical" evidence="1">
    <location>
        <begin position="3"/>
        <end position="23"/>
    </location>
</feature>
<feature type="transmembrane region" description="Helical" evidence="1">
    <location>
        <begin position="57"/>
        <end position="77"/>
    </location>
</feature>
<feature type="site" description="Reversibly protonated during proton transport" evidence="1">
    <location>
        <position position="61"/>
    </location>
</feature>
<sequence>MNPLISAASVIAAGLAVGLASIGPGVGQGTAAGQAVEGIARQPEAEGKIRGTLLLSLAFMEALTIYGLVVALALLFANPFV</sequence>
<keyword id="KW-0066">ATP synthesis</keyword>
<keyword id="KW-0138">CF(0)</keyword>
<keyword id="KW-0150">Chloroplast</keyword>
<keyword id="KW-0375">Hydrogen ion transport</keyword>
<keyword id="KW-0406">Ion transport</keyword>
<keyword id="KW-0446">Lipid-binding</keyword>
<keyword id="KW-0472">Membrane</keyword>
<keyword id="KW-0934">Plastid</keyword>
<keyword id="KW-0793">Thylakoid</keyword>
<keyword id="KW-0812">Transmembrane</keyword>
<keyword id="KW-1133">Transmembrane helix</keyword>
<keyword id="KW-0813">Transport</keyword>
<reference key="1">
    <citation type="submission" date="2007-03" db="EMBL/GenBank/DDBJ databases">
        <title>Sequencing analysis of Aethionema coridifolium chloroplast DNA.</title>
        <authorList>
            <person name="Hosouchi T."/>
            <person name="Tsuruoka H."/>
            <person name="Kotani H."/>
        </authorList>
    </citation>
    <scope>NUCLEOTIDE SEQUENCE [LARGE SCALE GENOMIC DNA]</scope>
</reference>